<dbReference type="EMBL" id="AF200184">
    <property type="protein sequence ID" value="AAF08302.1"/>
    <property type="molecule type" value="mRNA"/>
</dbReference>
<dbReference type="SMR" id="Q9SNW7"/>
<dbReference type="GO" id="GO:0005938">
    <property type="term" value="C:cell cortex"/>
    <property type="evidence" value="ECO:0007669"/>
    <property type="project" value="TreeGrafter"/>
</dbReference>
<dbReference type="GO" id="GO:0005856">
    <property type="term" value="C:cytoskeleton"/>
    <property type="evidence" value="ECO:0007669"/>
    <property type="project" value="UniProtKB-SubCell"/>
</dbReference>
<dbReference type="GO" id="GO:0003785">
    <property type="term" value="F:actin monomer binding"/>
    <property type="evidence" value="ECO:0007669"/>
    <property type="project" value="TreeGrafter"/>
</dbReference>
<dbReference type="CDD" id="cd00148">
    <property type="entry name" value="PROF"/>
    <property type="match status" value="1"/>
</dbReference>
<dbReference type="FunFam" id="3.30.450.30:FF:000001">
    <property type="entry name" value="Profilin"/>
    <property type="match status" value="1"/>
</dbReference>
<dbReference type="Gene3D" id="3.30.450.30">
    <property type="entry name" value="Dynein light chain 2a, cytoplasmic"/>
    <property type="match status" value="1"/>
</dbReference>
<dbReference type="InterPro" id="IPR048278">
    <property type="entry name" value="PFN"/>
</dbReference>
<dbReference type="InterPro" id="IPR005455">
    <property type="entry name" value="PFN_euk"/>
</dbReference>
<dbReference type="InterPro" id="IPR036140">
    <property type="entry name" value="PFN_sf"/>
</dbReference>
<dbReference type="InterPro" id="IPR027310">
    <property type="entry name" value="Profilin_CS"/>
</dbReference>
<dbReference type="PANTHER" id="PTHR11604">
    <property type="entry name" value="PROFILIN"/>
    <property type="match status" value="1"/>
</dbReference>
<dbReference type="PANTHER" id="PTHR11604:SF35">
    <property type="entry name" value="PROFILIN-3"/>
    <property type="match status" value="1"/>
</dbReference>
<dbReference type="Pfam" id="PF00235">
    <property type="entry name" value="Profilin"/>
    <property type="match status" value="1"/>
</dbReference>
<dbReference type="PRINTS" id="PR00392">
    <property type="entry name" value="PROFILIN"/>
</dbReference>
<dbReference type="PRINTS" id="PR01640">
    <property type="entry name" value="PROFILINPLNT"/>
</dbReference>
<dbReference type="SMART" id="SM00392">
    <property type="entry name" value="PROF"/>
    <property type="match status" value="1"/>
</dbReference>
<dbReference type="SUPFAM" id="SSF55770">
    <property type="entry name" value="Profilin (actin-binding protein)"/>
    <property type="match status" value="1"/>
</dbReference>
<dbReference type="PROSITE" id="PS00414">
    <property type="entry name" value="PROFILIN"/>
    <property type="match status" value="1"/>
</dbReference>
<evidence type="ECO:0000250" key="1"/>
<evidence type="ECO:0000305" key="2"/>
<feature type="initiator methionine" description="Removed" evidence="1">
    <location>
        <position position="1"/>
    </location>
</feature>
<feature type="chain" id="PRO_0000199640" description="Profilin-1">
    <location>
        <begin position="2"/>
        <end position="131"/>
    </location>
</feature>
<name>PROF1_LILLO</name>
<comment type="function">
    <text evidence="1">Binds to actin and affects the structure of the cytoskeleton. At high concentrations, profilin prevents the polymerization of actin, whereas it enhances it at low concentrations. By binding to PIP2, it inhibits the formation of IP3 and DG (By similarity).</text>
</comment>
<comment type="subunit">
    <text>Occurs in many kinds of cells as a complex with monomeric actin in a 1:1 ratio.</text>
</comment>
<comment type="subcellular location">
    <subcellularLocation>
        <location evidence="1">Cytoplasm</location>
        <location evidence="1">Cytoskeleton</location>
    </subcellularLocation>
</comment>
<comment type="similarity">
    <text evidence="2">Belongs to the profilin family.</text>
</comment>
<protein>
    <recommendedName>
        <fullName>Profilin-1</fullName>
    </recommendedName>
</protein>
<sequence length="131" mass="14071">MSWQTYVDDHLMCDVDGQHLTASAIVGHDGSIWAQSAGFPQFKPEEITGIMNDFAEPGSLAPTGLYLAGMKYMVIQGEPGAVIRGKKGSGGVTIKKTGQALIFGIYEEPMTPGQCNMVVERMGDYLVDQGL</sequence>
<proteinExistence type="evidence at transcript level"/>
<accession>Q9SNW7</accession>
<keyword id="KW-0009">Actin-binding</keyword>
<keyword id="KW-0963">Cytoplasm</keyword>
<keyword id="KW-0206">Cytoskeleton</keyword>
<reference key="1">
    <citation type="submission" date="1999-10" db="EMBL/GenBank/DDBJ databases">
        <title>cDNA cloning of three profilins from Lilium longiflorum pollen.</title>
        <authorList>
            <person name="Vidali L."/>
            <person name="Cheung A.Y."/>
            <person name="Hepler P.K."/>
        </authorList>
    </citation>
    <scope>NUCLEOTIDE SEQUENCE [MRNA]</scope>
    <source>
        <tissue>Pollen</tissue>
    </source>
</reference>
<organism>
    <name type="scientific">Lilium longiflorum</name>
    <name type="common">Trumpet lily</name>
    <dbReference type="NCBI Taxonomy" id="4690"/>
    <lineage>
        <taxon>Eukaryota</taxon>
        <taxon>Viridiplantae</taxon>
        <taxon>Streptophyta</taxon>
        <taxon>Embryophyta</taxon>
        <taxon>Tracheophyta</taxon>
        <taxon>Spermatophyta</taxon>
        <taxon>Magnoliopsida</taxon>
        <taxon>Liliopsida</taxon>
        <taxon>Liliales</taxon>
        <taxon>Liliaceae</taxon>
        <taxon>Lilium</taxon>
    </lineage>
</organism>